<gene>
    <name type="ORF">TRV_07111</name>
</gene>
<keyword id="KW-1015">Disulfide bond</keyword>
<keyword id="KW-0325">Glycoprotein</keyword>
<keyword id="KW-0378">Hydrolase</keyword>
<keyword id="KW-0479">Metal-binding</keyword>
<keyword id="KW-0482">Metalloprotease</keyword>
<keyword id="KW-0645">Protease</keyword>
<keyword id="KW-0964">Secreted</keyword>
<keyword id="KW-0732">Signal</keyword>
<keyword id="KW-0843">Virulence</keyword>
<keyword id="KW-0862">Zinc</keyword>
<protein>
    <recommendedName>
        <fullName>Extracellular metalloprotease TRV_07111</fullName>
        <ecNumber>3.4.24.-</ecNumber>
    </recommendedName>
</protein>
<feature type="signal peptide" evidence="2">
    <location>
        <begin position="1"/>
        <end position="19"/>
    </location>
</feature>
<feature type="chain" id="PRO_0000407217" description="Extracellular metalloprotease TRV_07111">
    <location>
        <begin position="20"/>
        <end position="294"/>
    </location>
</feature>
<feature type="active site" evidence="3">
    <location>
        <position position="186"/>
    </location>
</feature>
<feature type="binding site" evidence="3">
    <location>
        <position position="185"/>
    </location>
    <ligand>
        <name>Zn(2+)</name>
        <dbReference type="ChEBI" id="CHEBI:29105"/>
        <note>catalytic</note>
    </ligand>
</feature>
<feature type="binding site" evidence="3">
    <location>
        <position position="189"/>
    </location>
    <ligand>
        <name>Zn(2+)</name>
        <dbReference type="ChEBI" id="CHEBI:29105"/>
        <note>catalytic</note>
    </ligand>
</feature>
<feature type="glycosylation site" description="N-linked (GlcNAc...) asparagine" evidence="2">
    <location>
        <position position="49"/>
    </location>
</feature>
<feature type="glycosylation site" description="N-linked (GlcNAc...) asparagine" evidence="2">
    <location>
        <position position="54"/>
    </location>
</feature>
<feature type="glycosylation site" description="N-linked (GlcNAc...) asparagine" evidence="2">
    <location>
        <position position="74"/>
    </location>
</feature>
<feature type="disulfide bond" evidence="1">
    <location>
        <begin position="224"/>
        <end position="250"/>
    </location>
</feature>
<reference key="1">
    <citation type="journal article" date="2011" name="Genome Biol.">
        <title>Comparative and functional genomics provide insights into the pathogenicity of dermatophytic fungi.</title>
        <authorList>
            <person name="Burmester A."/>
            <person name="Shelest E."/>
            <person name="Gloeckner G."/>
            <person name="Heddergott C."/>
            <person name="Schindler S."/>
            <person name="Staib P."/>
            <person name="Heidel A."/>
            <person name="Felder M."/>
            <person name="Petzold A."/>
            <person name="Szafranski K."/>
            <person name="Feuermann M."/>
            <person name="Pedruzzi I."/>
            <person name="Priebe S."/>
            <person name="Groth M."/>
            <person name="Winkler R."/>
            <person name="Li W."/>
            <person name="Kniemeyer O."/>
            <person name="Schroeckh V."/>
            <person name="Hertweck C."/>
            <person name="Hube B."/>
            <person name="White T.C."/>
            <person name="Platzer M."/>
            <person name="Guthke R."/>
            <person name="Heitman J."/>
            <person name="Woestemeyer J."/>
            <person name="Zipfel P.F."/>
            <person name="Monod M."/>
            <person name="Brakhage A.A."/>
        </authorList>
    </citation>
    <scope>NUCLEOTIDE SEQUENCE [LARGE SCALE GENOMIC DNA]</scope>
    <source>
        <strain>HKI 0517</strain>
    </source>
</reference>
<organism>
    <name type="scientific">Trichophyton verrucosum (strain HKI 0517)</name>
    <dbReference type="NCBI Taxonomy" id="663202"/>
    <lineage>
        <taxon>Eukaryota</taxon>
        <taxon>Fungi</taxon>
        <taxon>Dikarya</taxon>
        <taxon>Ascomycota</taxon>
        <taxon>Pezizomycotina</taxon>
        <taxon>Eurotiomycetes</taxon>
        <taxon>Eurotiomycetidae</taxon>
        <taxon>Onygenales</taxon>
        <taxon>Arthrodermataceae</taxon>
        <taxon>Trichophyton</taxon>
    </lineage>
</organism>
<name>MEP7_TRIVH</name>
<evidence type="ECO:0000250" key="1"/>
<evidence type="ECO:0000255" key="2"/>
<evidence type="ECO:0000255" key="3">
    <source>
        <dbReference type="PROSITE-ProRule" id="PRU10095"/>
    </source>
</evidence>
<evidence type="ECO:0000305" key="4"/>
<proteinExistence type="inferred from homology"/>
<dbReference type="EC" id="3.4.24.-"/>
<dbReference type="EMBL" id="ACYE01000414">
    <property type="protein sequence ID" value="EFE38240.1"/>
    <property type="molecule type" value="Genomic_DNA"/>
</dbReference>
<dbReference type="RefSeq" id="XP_003018885.1">
    <property type="nucleotide sequence ID" value="XM_003018839.1"/>
</dbReference>
<dbReference type="SMR" id="D4DIV0"/>
<dbReference type="MEROPS" id="M43.008"/>
<dbReference type="GeneID" id="9580057"/>
<dbReference type="KEGG" id="tve:TRV_07111"/>
<dbReference type="HOGENOM" id="CLU_048726_0_0_1"/>
<dbReference type="OrthoDB" id="2392at34384"/>
<dbReference type="Proteomes" id="UP000008383">
    <property type="component" value="Unassembled WGS sequence"/>
</dbReference>
<dbReference type="GO" id="GO:0005576">
    <property type="term" value="C:extracellular region"/>
    <property type="evidence" value="ECO:0007669"/>
    <property type="project" value="UniProtKB-SubCell"/>
</dbReference>
<dbReference type="GO" id="GO:0046872">
    <property type="term" value="F:metal ion binding"/>
    <property type="evidence" value="ECO:0007669"/>
    <property type="project" value="UniProtKB-KW"/>
</dbReference>
<dbReference type="GO" id="GO:0008237">
    <property type="term" value="F:metallopeptidase activity"/>
    <property type="evidence" value="ECO:0007669"/>
    <property type="project" value="UniProtKB-KW"/>
</dbReference>
<dbReference type="GO" id="GO:0006508">
    <property type="term" value="P:proteolysis"/>
    <property type="evidence" value="ECO:0007669"/>
    <property type="project" value="UniProtKB-KW"/>
</dbReference>
<dbReference type="CDD" id="cd04275">
    <property type="entry name" value="ZnMc_pappalysin_like"/>
    <property type="match status" value="1"/>
</dbReference>
<dbReference type="Gene3D" id="3.40.390.10">
    <property type="entry name" value="Collagenase (Catalytic Domain)"/>
    <property type="match status" value="1"/>
</dbReference>
<dbReference type="InterPro" id="IPR024079">
    <property type="entry name" value="MetalloPept_cat_dom_sf"/>
</dbReference>
<dbReference type="InterPro" id="IPR008754">
    <property type="entry name" value="Peptidase_M43"/>
</dbReference>
<dbReference type="PANTHER" id="PTHR47466">
    <property type="match status" value="1"/>
</dbReference>
<dbReference type="PANTHER" id="PTHR47466:SF1">
    <property type="entry name" value="METALLOPROTEASE MEP1 (AFU_ORTHOLOGUE AFUA_1G07730)-RELATED"/>
    <property type="match status" value="1"/>
</dbReference>
<dbReference type="Pfam" id="PF05572">
    <property type="entry name" value="Peptidase_M43"/>
    <property type="match status" value="1"/>
</dbReference>
<dbReference type="SUPFAM" id="SSF55486">
    <property type="entry name" value="Metalloproteases ('zincins'), catalytic domain"/>
    <property type="match status" value="1"/>
</dbReference>
<dbReference type="PROSITE" id="PS00142">
    <property type="entry name" value="ZINC_PROTEASE"/>
    <property type="match status" value="1"/>
</dbReference>
<accession>D4DIV0</accession>
<comment type="function">
    <text evidence="1">Secreted metalloproteinase that allows assimilation of proteinaceous substrates. Plays a pivotal role as a pathogenicity determinant during infections and contributes to the ability of the pathogen to persist within the mammalian host (By similarity).</text>
</comment>
<comment type="subcellular location">
    <subcellularLocation>
        <location evidence="1">Secreted</location>
    </subcellularLocation>
</comment>
<comment type="similarity">
    <text evidence="4">Belongs to the peptidase M43B family.</text>
</comment>
<sequence>MRFSVVFAAIAALSSVVTAERGCGAIPHKGFATELMEAMDNARASSFSNTTAANVTINTYFHVITDGNKGQINNDTLQKQIEVLNKDYSGTGFSFKLVGSERTNNAGWASGNDDFGMKSSLRKGGYDSLNVYFVPMLREGLLGFCHFPTKNPGKRQLIMDGCVINSNTVPGGSAQNYDEGRTTTHEVGHFMGLYHVFNDNGGGCQQDGDMVDDTPVQSKPSSGCPKGKDSCPQQGVDSIHNYMDYSYDSCLNEFSPGQIQRMQMLWKQFRAGNSNRSPKAMKPIIPSYVSDPVM</sequence>